<proteinExistence type="evidence at transcript level"/>
<accession>Q9I845</accession>
<keyword id="KW-0106">Calcium</keyword>
<keyword id="KW-1015">Disulfide bond</keyword>
<keyword id="KW-0378">Hydrolase</keyword>
<keyword id="KW-0442">Lipid degradation</keyword>
<keyword id="KW-0443">Lipid metabolism</keyword>
<keyword id="KW-0479">Metal-binding</keyword>
<keyword id="KW-0964">Secreted</keyword>
<keyword id="KW-0732">Signal</keyword>
<feature type="signal peptide" evidence="2">
    <location>
        <begin position="1"/>
        <end position="21"/>
    </location>
</feature>
<feature type="propeptide" id="PRO_0000022902" evidence="1">
    <location>
        <begin position="22"/>
        <end position="27"/>
    </location>
</feature>
<feature type="chain" id="PRO_0000022903" description="Basic phospholipase A2 cPt09">
    <location>
        <begin position="28"/>
        <end position="145"/>
    </location>
</feature>
<feature type="active site" evidence="1">
    <location>
        <position position="75"/>
    </location>
</feature>
<feature type="active site" evidence="1">
    <location>
        <position position="119"/>
    </location>
</feature>
<feature type="binding site" evidence="1">
    <location>
        <position position="55"/>
    </location>
    <ligand>
        <name>Ca(2+)</name>
        <dbReference type="ChEBI" id="CHEBI:29108"/>
    </ligand>
</feature>
<feature type="binding site" evidence="1">
    <location>
        <position position="57"/>
    </location>
    <ligand>
        <name>Ca(2+)</name>
        <dbReference type="ChEBI" id="CHEBI:29108"/>
    </ligand>
</feature>
<feature type="binding site" evidence="1">
    <location>
        <position position="59"/>
    </location>
    <ligand>
        <name>Ca(2+)</name>
        <dbReference type="ChEBI" id="CHEBI:29108"/>
    </ligand>
</feature>
<feature type="binding site" evidence="1">
    <location>
        <position position="76"/>
    </location>
    <ligand>
        <name>Ca(2+)</name>
        <dbReference type="ChEBI" id="CHEBI:29108"/>
    </ligand>
</feature>
<feature type="disulfide bond" evidence="1">
    <location>
        <begin position="38"/>
        <end position="98"/>
    </location>
</feature>
<feature type="disulfide bond" evidence="1">
    <location>
        <begin position="54"/>
        <end position="144"/>
    </location>
</feature>
<feature type="disulfide bond" evidence="1">
    <location>
        <begin position="56"/>
        <end position="72"/>
    </location>
</feature>
<feature type="disulfide bond" evidence="1">
    <location>
        <begin position="71"/>
        <end position="125"/>
    </location>
</feature>
<feature type="disulfide bond" evidence="1">
    <location>
        <begin position="78"/>
        <end position="118"/>
    </location>
</feature>
<feature type="disulfide bond" evidence="1">
    <location>
        <begin position="87"/>
        <end position="111"/>
    </location>
</feature>
<feature type="disulfide bond" evidence="1">
    <location>
        <begin position="105"/>
        <end position="116"/>
    </location>
</feature>
<sequence>MYPAHLLVLLAVCVSLLGASTIPPLPLNLVQFTYLIQCANKGSRASYHYADYGCYCGAGGSGTPVDELDRCCKVHDDCYGEAEKMGCYPKLTMYNYYCGTEGPYCNTKTDCQRYVCACDLQAAKCFARSPYNNKNYNIDTSKRCK</sequence>
<evidence type="ECO:0000250" key="1"/>
<evidence type="ECO:0000255" key="2"/>
<evidence type="ECO:0000255" key="3">
    <source>
        <dbReference type="PROSITE-ProRule" id="PRU10035"/>
    </source>
</evidence>
<evidence type="ECO:0000255" key="4">
    <source>
        <dbReference type="PROSITE-ProRule" id="PRU10036"/>
    </source>
</evidence>
<evidence type="ECO:0000305" key="5"/>
<name>PA2BC_LATSE</name>
<reference key="1">
    <citation type="submission" date="2000-01" db="EMBL/GenBank/DDBJ databases">
        <authorList>
            <person name="Tamiya T."/>
            <person name="Fujimi T.J."/>
        </authorList>
    </citation>
    <scope>NUCLEOTIDE SEQUENCE [MRNA]</scope>
    <source>
        <tissue>Venom gland</tissue>
    </source>
</reference>
<dbReference type="EC" id="3.1.1.4"/>
<dbReference type="EMBL" id="AB037411">
    <property type="protein sequence ID" value="BAB03298.1"/>
    <property type="molecule type" value="mRNA"/>
</dbReference>
<dbReference type="SMR" id="Q9I845"/>
<dbReference type="GO" id="GO:0005576">
    <property type="term" value="C:extracellular region"/>
    <property type="evidence" value="ECO:0007669"/>
    <property type="project" value="UniProtKB-SubCell"/>
</dbReference>
<dbReference type="GO" id="GO:0005509">
    <property type="term" value="F:calcium ion binding"/>
    <property type="evidence" value="ECO:0007669"/>
    <property type="project" value="InterPro"/>
</dbReference>
<dbReference type="GO" id="GO:0047498">
    <property type="term" value="F:calcium-dependent phospholipase A2 activity"/>
    <property type="evidence" value="ECO:0007669"/>
    <property type="project" value="TreeGrafter"/>
</dbReference>
<dbReference type="GO" id="GO:0005543">
    <property type="term" value="F:phospholipid binding"/>
    <property type="evidence" value="ECO:0007669"/>
    <property type="project" value="TreeGrafter"/>
</dbReference>
<dbReference type="GO" id="GO:0050482">
    <property type="term" value="P:arachidonate secretion"/>
    <property type="evidence" value="ECO:0007669"/>
    <property type="project" value="InterPro"/>
</dbReference>
<dbReference type="GO" id="GO:0016042">
    <property type="term" value="P:lipid catabolic process"/>
    <property type="evidence" value="ECO:0007669"/>
    <property type="project" value="UniProtKB-KW"/>
</dbReference>
<dbReference type="GO" id="GO:0006644">
    <property type="term" value="P:phospholipid metabolic process"/>
    <property type="evidence" value="ECO:0007669"/>
    <property type="project" value="InterPro"/>
</dbReference>
<dbReference type="CDD" id="cd00125">
    <property type="entry name" value="PLA2c"/>
    <property type="match status" value="1"/>
</dbReference>
<dbReference type="FunFam" id="1.20.90.10:FF:000007">
    <property type="entry name" value="Acidic phospholipase A2"/>
    <property type="match status" value="1"/>
</dbReference>
<dbReference type="Gene3D" id="1.20.90.10">
    <property type="entry name" value="Phospholipase A2 domain"/>
    <property type="match status" value="1"/>
</dbReference>
<dbReference type="InterPro" id="IPR001211">
    <property type="entry name" value="PLipase_A2"/>
</dbReference>
<dbReference type="InterPro" id="IPR033112">
    <property type="entry name" value="PLipase_A2_Asp_AS"/>
</dbReference>
<dbReference type="InterPro" id="IPR016090">
    <property type="entry name" value="PLipase_A2_dom"/>
</dbReference>
<dbReference type="InterPro" id="IPR036444">
    <property type="entry name" value="PLipase_A2_dom_sf"/>
</dbReference>
<dbReference type="InterPro" id="IPR033113">
    <property type="entry name" value="PLipase_A2_His_AS"/>
</dbReference>
<dbReference type="PANTHER" id="PTHR11716:SF51">
    <property type="entry name" value="PHOSPHOLIPASE A2"/>
    <property type="match status" value="1"/>
</dbReference>
<dbReference type="PANTHER" id="PTHR11716">
    <property type="entry name" value="PHOSPHOLIPASE A2 FAMILY MEMBER"/>
    <property type="match status" value="1"/>
</dbReference>
<dbReference type="Pfam" id="PF00068">
    <property type="entry name" value="Phospholip_A2_1"/>
    <property type="match status" value="1"/>
</dbReference>
<dbReference type="PRINTS" id="PR00389">
    <property type="entry name" value="PHPHLIPASEA2"/>
</dbReference>
<dbReference type="SMART" id="SM00085">
    <property type="entry name" value="PA2c"/>
    <property type="match status" value="1"/>
</dbReference>
<dbReference type="SUPFAM" id="SSF48619">
    <property type="entry name" value="Phospholipase A2, PLA2"/>
    <property type="match status" value="1"/>
</dbReference>
<dbReference type="PROSITE" id="PS00119">
    <property type="entry name" value="PA2_ASP"/>
    <property type="match status" value="1"/>
</dbReference>
<dbReference type="PROSITE" id="PS00118">
    <property type="entry name" value="PA2_HIS"/>
    <property type="match status" value="1"/>
</dbReference>
<protein>
    <recommendedName>
        <fullName>Basic phospholipase A2 cPt09</fullName>
        <shortName>svPLA2</shortName>
        <ecNumber>3.1.1.4</ecNumber>
    </recommendedName>
    <alternativeName>
        <fullName>Phosphatidylcholine 2-acylhydrolase</fullName>
    </alternativeName>
</protein>
<organism>
    <name type="scientific">Laticauda semifasciata</name>
    <name type="common">Black-banded sea krait</name>
    <name type="synonym">Pseudolaticauda semifasciata</name>
    <dbReference type="NCBI Taxonomy" id="8631"/>
    <lineage>
        <taxon>Eukaryota</taxon>
        <taxon>Metazoa</taxon>
        <taxon>Chordata</taxon>
        <taxon>Craniata</taxon>
        <taxon>Vertebrata</taxon>
        <taxon>Euteleostomi</taxon>
        <taxon>Lepidosauria</taxon>
        <taxon>Squamata</taxon>
        <taxon>Bifurcata</taxon>
        <taxon>Unidentata</taxon>
        <taxon>Episquamata</taxon>
        <taxon>Toxicofera</taxon>
        <taxon>Serpentes</taxon>
        <taxon>Colubroidea</taxon>
        <taxon>Elapidae</taxon>
        <taxon>Laticaudinae</taxon>
        <taxon>Laticauda</taxon>
    </lineage>
</organism>
<comment type="function">
    <text evidence="1">PLA2 catalyzes the calcium-dependent hydrolysis of the 2-acyl groups in 3-sn-phosphoglycerides.</text>
</comment>
<comment type="catalytic activity">
    <reaction evidence="3 4">
        <text>a 1,2-diacyl-sn-glycero-3-phosphocholine + H2O = a 1-acyl-sn-glycero-3-phosphocholine + a fatty acid + H(+)</text>
        <dbReference type="Rhea" id="RHEA:15801"/>
        <dbReference type="ChEBI" id="CHEBI:15377"/>
        <dbReference type="ChEBI" id="CHEBI:15378"/>
        <dbReference type="ChEBI" id="CHEBI:28868"/>
        <dbReference type="ChEBI" id="CHEBI:57643"/>
        <dbReference type="ChEBI" id="CHEBI:58168"/>
        <dbReference type="EC" id="3.1.1.4"/>
    </reaction>
</comment>
<comment type="cofactor">
    <cofactor evidence="1">
        <name>Ca(2+)</name>
        <dbReference type="ChEBI" id="CHEBI:29108"/>
    </cofactor>
    <text evidence="1">Binds 1 Ca(2+) ion.</text>
</comment>
<comment type="subcellular location">
    <subcellularLocation>
        <location evidence="1">Secreted</location>
    </subcellularLocation>
</comment>
<comment type="tissue specificity">
    <text>Expressed by the venom gland.</text>
</comment>
<comment type="similarity">
    <text evidence="5">Belongs to the phospholipase A2 family. Group I subfamily. D49 sub-subfamily.</text>
</comment>